<protein>
    <recommendedName>
        <fullName evidence="1">Elongation factor 4</fullName>
        <shortName evidence="1">EF-4</shortName>
        <ecNumber evidence="1">3.6.5.n1</ecNumber>
    </recommendedName>
    <alternativeName>
        <fullName evidence="1">Ribosomal back-translocase LepA</fullName>
    </alternativeName>
</protein>
<gene>
    <name evidence="1" type="primary">lepA</name>
    <name type="ordered locus">PG_1241</name>
</gene>
<dbReference type="EC" id="3.6.5.n1" evidence="1"/>
<dbReference type="EMBL" id="AE015924">
    <property type="protein sequence ID" value="AAQ66326.1"/>
    <property type="molecule type" value="Genomic_DNA"/>
</dbReference>
<dbReference type="RefSeq" id="WP_004584510.1">
    <property type="nucleotide sequence ID" value="NC_002950.2"/>
</dbReference>
<dbReference type="SMR" id="Q7MV56"/>
<dbReference type="STRING" id="242619.PG_1241"/>
<dbReference type="EnsemblBacteria" id="AAQ66326">
    <property type="protein sequence ID" value="AAQ66326"/>
    <property type="gene ID" value="PG_1241"/>
</dbReference>
<dbReference type="KEGG" id="pgi:PG_1241"/>
<dbReference type="eggNOG" id="COG0481">
    <property type="taxonomic scope" value="Bacteria"/>
</dbReference>
<dbReference type="HOGENOM" id="CLU_009995_3_3_10"/>
<dbReference type="Proteomes" id="UP000000588">
    <property type="component" value="Chromosome"/>
</dbReference>
<dbReference type="GO" id="GO:0005886">
    <property type="term" value="C:plasma membrane"/>
    <property type="evidence" value="ECO:0007669"/>
    <property type="project" value="UniProtKB-SubCell"/>
</dbReference>
<dbReference type="GO" id="GO:0005525">
    <property type="term" value="F:GTP binding"/>
    <property type="evidence" value="ECO:0007669"/>
    <property type="project" value="UniProtKB-UniRule"/>
</dbReference>
<dbReference type="GO" id="GO:0003924">
    <property type="term" value="F:GTPase activity"/>
    <property type="evidence" value="ECO:0007669"/>
    <property type="project" value="UniProtKB-UniRule"/>
</dbReference>
<dbReference type="GO" id="GO:0043022">
    <property type="term" value="F:ribosome binding"/>
    <property type="evidence" value="ECO:0007669"/>
    <property type="project" value="UniProtKB-UniRule"/>
</dbReference>
<dbReference type="GO" id="GO:0003746">
    <property type="term" value="F:translation elongation factor activity"/>
    <property type="evidence" value="ECO:0007669"/>
    <property type="project" value="UniProtKB-UniRule"/>
</dbReference>
<dbReference type="GO" id="GO:0045727">
    <property type="term" value="P:positive regulation of translation"/>
    <property type="evidence" value="ECO:0007669"/>
    <property type="project" value="UniProtKB-UniRule"/>
</dbReference>
<dbReference type="CDD" id="cd03699">
    <property type="entry name" value="EF4_II"/>
    <property type="match status" value="1"/>
</dbReference>
<dbReference type="CDD" id="cd16260">
    <property type="entry name" value="EF4_III"/>
    <property type="match status" value="1"/>
</dbReference>
<dbReference type="CDD" id="cd01890">
    <property type="entry name" value="LepA"/>
    <property type="match status" value="1"/>
</dbReference>
<dbReference type="CDD" id="cd03709">
    <property type="entry name" value="lepA_C"/>
    <property type="match status" value="1"/>
</dbReference>
<dbReference type="FunFam" id="3.40.50.300:FF:000078">
    <property type="entry name" value="Elongation factor 4"/>
    <property type="match status" value="1"/>
</dbReference>
<dbReference type="FunFam" id="2.40.30.10:FF:000015">
    <property type="entry name" value="Translation factor GUF1, mitochondrial"/>
    <property type="match status" value="1"/>
</dbReference>
<dbReference type="FunFam" id="3.30.70.240:FF:000007">
    <property type="entry name" value="Translation factor GUF1, mitochondrial"/>
    <property type="match status" value="1"/>
</dbReference>
<dbReference type="FunFam" id="3.30.70.2570:FF:000001">
    <property type="entry name" value="Translation factor GUF1, mitochondrial"/>
    <property type="match status" value="1"/>
</dbReference>
<dbReference type="FunFam" id="3.30.70.870:FF:000004">
    <property type="entry name" value="Translation factor GUF1, mitochondrial"/>
    <property type="match status" value="1"/>
</dbReference>
<dbReference type="Gene3D" id="3.30.70.240">
    <property type="match status" value="1"/>
</dbReference>
<dbReference type="Gene3D" id="3.30.70.2570">
    <property type="entry name" value="Elongation factor 4, C-terminal domain"/>
    <property type="match status" value="1"/>
</dbReference>
<dbReference type="Gene3D" id="3.30.70.870">
    <property type="entry name" value="Elongation Factor G (Translational Gtpase), domain 3"/>
    <property type="match status" value="1"/>
</dbReference>
<dbReference type="Gene3D" id="3.40.50.300">
    <property type="entry name" value="P-loop containing nucleotide triphosphate hydrolases"/>
    <property type="match status" value="1"/>
</dbReference>
<dbReference type="Gene3D" id="2.40.30.10">
    <property type="entry name" value="Translation factors"/>
    <property type="match status" value="1"/>
</dbReference>
<dbReference type="HAMAP" id="MF_00071">
    <property type="entry name" value="LepA"/>
    <property type="match status" value="1"/>
</dbReference>
<dbReference type="InterPro" id="IPR006297">
    <property type="entry name" value="EF-4"/>
</dbReference>
<dbReference type="InterPro" id="IPR035647">
    <property type="entry name" value="EFG_III/V"/>
</dbReference>
<dbReference type="InterPro" id="IPR000640">
    <property type="entry name" value="EFG_V-like"/>
</dbReference>
<dbReference type="InterPro" id="IPR004161">
    <property type="entry name" value="EFTu-like_2"/>
</dbReference>
<dbReference type="InterPro" id="IPR038363">
    <property type="entry name" value="LepA_C_sf"/>
</dbReference>
<dbReference type="InterPro" id="IPR013842">
    <property type="entry name" value="LepA_CTD"/>
</dbReference>
<dbReference type="InterPro" id="IPR035654">
    <property type="entry name" value="LepA_IV"/>
</dbReference>
<dbReference type="InterPro" id="IPR027417">
    <property type="entry name" value="P-loop_NTPase"/>
</dbReference>
<dbReference type="InterPro" id="IPR005225">
    <property type="entry name" value="Small_GTP-bd"/>
</dbReference>
<dbReference type="InterPro" id="IPR000795">
    <property type="entry name" value="T_Tr_GTP-bd_dom"/>
</dbReference>
<dbReference type="InterPro" id="IPR009000">
    <property type="entry name" value="Transl_B-barrel_sf"/>
</dbReference>
<dbReference type="NCBIfam" id="TIGR01393">
    <property type="entry name" value="lepA"/>
    <property type="match status" value="1"/>
</dbReference>
<dbReference type="NCBIfam" id="TIGR00231">
    <property type="entry name" value="small_GTP"/>
    <property type="match status" value="1"/>
</dbReference>
<dbReference type="PANTHER" id="PTHR43512:SF4">
    <property type="entry name" value="TRANSLATION FACTOR GUF1 HOMOLOG, CHLOROPLASTIC"/>
    <property type="match status" value="1"/>
</dbReference>
<dbReference type="PANTHER" id="PTHR43512">
    <property type="entry name" value="TRANSLATION FACTOR GUF1-RELATED"/>
    <property type="match status" value="1"/>
</dbReference>
<dbReference type="Pfam" id="PF00679">
    <property type="entry name" value="EFG_C"/>
    <property type="match status" value="1"/>
</dbReference>
<dbReference type="Pfam" id="PF00009">
    <property type="entry name" value="GTP_EFTU"/>
    <property type="match status" value="1"/>
</dbReference>
<dbReference type="Pfam" id="PF03144">
    <property type="entry name" value="GTP_EFTU_D2"/>
    <property type="match status" value="1"/>
</dbReference>
<dbReference type="Pfam" id="PF06421">
    <property type="entry name" value="LepA_C"/>
    <property type="match status" value="1"/>
</dbReference>
<dbReference type="PRINTS" id="PR00315">
    <property type="entry name" value="ELONGATNFCT"/>
</dbReference>
<dbReference type="SUPFAM" id="SSF54980">
    <property type="entry name" value="EF-G C-terminal domain-like"/>
    <property type="match status" value="2"/>
</dbReference>
<dbReference type="SUPFAM" id="SSF52540">
    <property type="entry name" value="P-loop containing nucleoside triphosphate hydrolases"/>
    <property type="match status" value="1"/>
</dbReference>
<dbReference type="SUPFAM" id="SSF50447">
    <property type="entry name" value="Translation proteins"/>
    <property type="match status" value="1"/>
</dbReference>
<dbReference type="PROSITE" id="PS51722">
    <property type="entry name" value="G_TR_2"/>
    <property type="match status" value="1"/>
</dbReference>
<comment type="function">
    <text evidence="1">Required for accurate and efficient protein synthesis under certain stress conditions. May act as a fidelity factor of the translation reaction, by catalyzing a one-codon backward translocation of tRNAs on improperly translocated ribosomes. Back-translocation proceeds from a post-translocation (POST) complex to a pre-translocation (PRE) complex, thus giving elongation factor G a second chance to translocate the tRNAs correctly. Binds to ribosomes in a GTP-dependent manner.</text>
</comment>
<comment type="catalytic activity">
    <reaction evidence="1">
        <text>GTP + H2O = GDP + phosphate + H(+)</text>
        <dbReference type="Rhea" id="RHEA:19669"/>
        <dbReference type="ChEBI" id="CHEBI:15377"/>
        <dbReference type="ChEBI" id="CHEBI:15378"/>
        <dbReference type="ChEBI" id="CHEBI:37565"/>
        <dbReference type="ChEBI" id="CHEBI:43474"/>
        <dbReference type="ChEBI" id="CHEBI:58189"/>
        <dbReference type="EC" id="3.6.5.n1"/>
    </reaction>
</comment>
<comment type="subcellular location">
    <subcellularLocation>
        <location evidence="1">Cell inner membrane</location>
        <topology evidence="1">Peripheral membrane protein</topology>
        <orientation evidence="1">Cytoplasmic side</orientation>
    </subcellularLocation>
</comment>
<comment type="similarity">
    <text evidence="1">Belongs to the TRAFAC class translation factor GTPase superfamily. Classic translation factor GTPase family. LepA subfamily.</text>
</comment>
<evidence type="ECO:0000255" key="1">
    <source>
        <dbReference type="HAMAP-Rule" id="MF_00071"/>
    </source>
</evidence>
<proteinExistence type="inferred from homology"/>
<name>LEPA_PORGI</name>
<reference key="1">
    <citation type="journal article" date="2003" name="J. Bacteriol.">
        <title>Complete genome sequence of the oral pathogenic bacterium Porphyromonas gingivalis strain W83.</title>
        <authorList>
            <person name="Nelson K.E."/>
            <person name="Fleischmann R.D."/>
            <person name="DeBoy R.T."/>
            <person name="Paulsen I.T."/>
            <person name="Fouts D.E."/>
            <person name="Eisen J.A."/>
            <person name="Daugherty S.C."/>
            <person name="Dodson R.J."/>
            <person name="Durkin A.S."/>
            <person name="Gwinn M.L."/>
            <person name="Haft D.H."/>
            <person name="Kolonay J.F."/>
            <person name="Nelson W.C."/>
            <person name="Mason T.M."/>
            <person name="Tallon L."/>
            <person name="Gray J."/>
            <person name="Granger D."/>
            <person name="Tettelin H."/>
            <person name="Dong H."/>
            <person name="Galvin J.L."/>
            <person name="Duncan M.J."/>
            <person name="Dewhirst F.E."/>
            <person name="Fraser C.M."/>
        </authorList>
    </citation>
    <scope>NUCLEOTIDE SEQUENCE [LARGE SCALE GENOMIC DNA]</scope>
    <source>
        <strain>ATCC BAA-308 / W83</strain>
    </source>
</reference>
<feature type="chain" id="PRO_0000176318" description="Elongation factor 4">
    <location>
        <begin position="1"/>
        <end position="595"/>
    </location>
</feature>
<feature type="domain" description="tr-type G">
    <location>
        <begin position="2"/>
        <end position="183"/>
    </location>
</feature>
<feature type="binding site" evidence="1">
    <location>
        <begin position="14"/>
        <end position="19"/>
    </location>
    <ligand>
        <name>GTP</name>
        <dbReference type="ChEBI" id="CHEBI:37565"/>
    </ligand>
</feature>
<feature type="binding site" evidence="1">
    <location>
        <begin position="130"/>
        <end position="133"/>
    </location>
    <ligand>
        <name>GTP</name>
        <dbReference type="ChEBI" id="CHEBI:37565"/>
    </ligand>
</feature>
<sequence>MKNIRNFCIIAHIDHGKSTLADRLLEYTNTVSGKDLQDQVLDNMDLERERGITIKSHAIQMDYEMDGEKYVLNLIDTPGHVDFSYEVSRSIAACEGALLIVDAAQGIQAQTISNLYMAIENDLTIIPIVNKVDLPSAMPEEVEDQIIELLGCDRSEIIRASGKTGQGVDQILRAIVEQVPAPAGDPDAPLQCLIFDSVFNPFRGIIAYFKVVNGSIRKGDHVKFIATEKEYDADEVGVLRLDMEPRSEVKTGDVGYIISGIKTSREVKVGDTITHVAKPAKEAIAGFEEVKPMVFAGVYPIEAEDFENLRASLEKLQLNDASLTFQPESSVALGFGFRCGFLGLLHMEIVQERLDREFNMNVITTVPNVSYKVYDKKGGCKEVHNPSGLLEPTLIDHIEEPFIRASVITNTAYIGPIMTLCLGKRGVLVKQEYISGDRVEIFYDLPLGEIVIDFYDKLKSISKGYASFDYHLHDFRESKLVKLDILLNGEPVDALSTLTHVDNSVTFGRRMCEKLKELIPRQQFEIAIQAAIGAKIIARETIKPVRKDVTAKCYGGDISRKRKLLEKQKEGKKRMKQIGTVEVPQKAFLAVLKLD</sequence>
<keyword id="KW-0997">Cell inner membrane</keyword>
<keyword id="KW-1003">Cell membrane</keyword>
<keyword id="KW-0342">GTP-binding</keyword>
<keyword id="KW-0378">Hydrolase</keyword>
<keyword id="KW-0472">Membrane</keyword>
<keyword id="KW-0547">Nucleotide-binding</keyword>
<keyword id="KW-0648">Protein biosynthesis</keyword>
<keyword id="KW-1185">Reference proteome</keyword>
<accession>Q7MV56</accession>
<organism>
    <name type="scientific">Porphyromonas gingivalis (strain ATCC BAA-308 / W83)</name>
    <dbReference type="NCBI Taxonomy" id="242619"/>
    <lineage>
        <taxon>Bacteria</taxon>
        <taxon>Pseudomonadati</taxon>
        <taxon>Bacteroidota</taxon>
        <taxon>Bacteroidia</taxon>
        <taxon>Bacteroidales</taxon>
        <taxon>Porphyromonadaceae</taxon>
        <taxon>Porphyromonas</taxon>
    </lineage>
</organism>